<keyword id="KW-0046">Antibiotic resistance</keyword>
<keyword id="KW-1003">Cell membrane</keyword>
<keyword id="KW-0133">Cell shape</keyword>
<keyword id="KW-0961">Cell wall biogenesis/degradation</keyword>
<keyword id="KW-0378">Hydrolase</keyword>
<keyword id="KW-0472">Membrane</keyword>
<keyword id="KW-0573">Peptidoglycan synthesis</keyword>
<keyword id="KW-1185">Reference proteome</keyword>
<keyword id="KW-0812">Transmembrane</keyword>
<keyword id="KW-1133">Transmembrane helix</keyword>
<name>UPPP_ACET2</name>
<gene>
    <name evidence="1" type="primary">uppP</name>
    <name type="ordered locus">Cthe_2305</name>
</gene>
<dbReference type="EC" id="3.6.1.27" evidence="1"/>
<dbReference type="EMBL" id="CP000568">
    <property type="protein sequence ID" value="ABN53507.1"/>
    <property type="molecule type" value="Genomic_DNA"/>
</dbReference>
<dbReference type="SMR" id="A3DHS8"/>
<dbReference type="STRING" id="203119.Cthe_2305"/>
<dbReference type="KEGG" id="cth:Cthe_2305"/>
<dbReference type="eggNOG" id="COG1968">
    <property type="taxonomic scope" value="Bacteria"/>
</dbReference>
<dbReference type="HOGENOM" id="CLU_060296_2_0_9"/>
<dbReference type="OrthoDB" id="9808289at2"/>
<dbReference type="Proteomes" id="UP000002145">
    <property type="component" value="Chromosome"/>
</dbReference>
<dbReference type="GO" id="GO:0005886">
    <property type="term" value="C:plasma membrane"/>
    <property type="evidence" value="ECO:0007669"/>
    <property type="project" value="UniProtKB-SubCell"/>
</dbReference>
<dbReference type="GO" id="GO:0050380">
    <property type="term" value="F:undecaprenyl-diphosphatase activity"/>
    <property type="evidence" value="ECO:0007669"/>
    <property type="project" value="UniProtKB-UniRule"/>
</dbReference>
<dbReference type="GO" id="GO:0071555">
    <property type="term" value="P:cell wall organization"/>
    <property type="evidence" value="ECO:0007669"/>
    <property type="project" value="UniProtKB-KW"/>
</dbReference>
<dbReference type="GO" id="GO:0009252">
    <property type="term" value="P:peptidoglycan biosynthetic process"/>
    <property type="evidence" value="ECO:0007669"/>
    <property type="project" value="UniProtKB-KW"/>
</dbReference>
<dbReference type="GO" id="GO:0008360">
    <property type="term" value="P:regulation of cell shape"/>
    <property type="evidence" value="ECO:0007669"/>
    <property type="project" value="UniProtKB-KW"/>
</dbReference>
<dbReference type="GO" id="GO:0046677">
    <property type="term" value="P:response to antibiotic"/>
    <property type="evidence" value="ECO:0007669"/>
    <property type="project" value="UniProtKB-UniRule"/>
</dbReference>
<dbReference type="HAMAP" id="MF_01006">
    <property type="entry name" value="Undec_diphosphatase"/>
    <property type="match status" value="1"/>
</dbReference>
<dbReference type="InterPro" id="IPR003824">
    <property type="entry name" value="UppP"/>
</dbReference>
<dbReference type="NCBIfam" id="NF001389">
    <property type="entry name" value="PRK00281.1-2"/>
    <property type="match status" value="1"/>
</dbReference>
<dbReference type="NCBIfam" id="NF001390">
    <property type="entry name" value="PRK00281.1-4"/>
    <property type="match status" value="1"/>
</dbReference>
<dbReference type="NCBIfam" id="NF001391">
    <property type="entry name" value="PRK00281.1-5"/>
    <property type="match status" value="1"/>
</dbReference>
<dbReference type="NCBIfam" id="TIGR00753">
    <property type="entry name" value="undec_PP_bacA"/>
    <property type="match status" value="1"/>
</dbReference>
<dbReference type="PANTHER" id="PTHR30622">
    <property type="entry name" value="UNDECAPRENYL-DIPHOSPHATASE"/>
    <property type="match status" value="1"/>
</dbReference>
<dbReference type="PANTHER" id="PTHR30622:SF3">
    <property type="entry name" value="UNDECAPRENYL-DIPHOSPHATASE"/>
    <property type="match status" value="1"/>
</dbReference>
<dbReference type="Pfam" id="PF02673">
    <property type="entry name" value="BacA"/>
    <property type="match status" value="1"/>
</dbReference>
<sequence length="272" mass="30529">MLELIKAIFLGIVEGITEWLPISSTGHMILVEEFINMNLSDEFMEMFRVVIQLGAIMAVVVLYWNKLFPFSFEDRIQIKKDTFSLWIKVLAATLPAALIGVPFDDKIDELFYNYITVAITLIVYGVLFIIMENRNKSKIPAISTFEELGYKAVLLIGAFQVLALIPGTSRSGATILGAIMIGCSREIAAEFSFYLAIPVMFGASLLKLVKFGFAFSQTELIILLTGMIVAFAVSIFAIKFLMGYIKRNDFKAFGYYRIILGLIVVLYFLAVR</sequence>
<proteinExistence type="inferred from homology"/>
<feature type="chain" id="PRO_0000290703" description="Undecaprenyl-diphosphatase">
    <location>
        <begin position="1"/>
        <end position="272"/>
    </location>
</feature>
<feature type="transmembrane region" description="Helical" evidence="1">
    <location>
        <begin position="2"/>
        <end position="22"/>
    </location>
</feature>
<feature type="transmembrane region" description="Helical" evidence="1">
    <location>
        <begin position="50"/>
        <end position="70"/>
    </location>
</feature>
<feature type="transmembrane region" description="Helical" evidence="1">
    <location>
        <begin position="83"/>
        <end position="103"/>
    </location>
</feature>
<feature type="transmembrane region" description="Helical" evidence="1">
    <location>
        <begin position="110"/>
        <end position="130"/>
    </location>
</feature>
<feature type="transmembrane region" description="Helical" evidence="1">
    <location>
        <begin position="148"/>
        <end position="168"/>
    </location>
</feature>
<feature type="transmembrane region" description="Helical" evidence="1">
    <location>
        <begin position="195"/>
        <end position="215"/>
    </location>
</feature>
<feature type="transmembrane region" description="Helical" evidence="1">
    <location>
        <begin position="220"/>
        <end position="240"/>
    </location>
</feature>
<feature type="transmembrane region" description="Helical" evidence="1">
    <location>
        <begin position="250"/>
        <end position="270"/>
    </location>
</feature>
<evidence type="ECO:0000255" key="1">
    <source>
        <dbReference type="HAMAP-Rule" id="MF_01006"/>
    </source>
</evidence>
<protein>
    <recommendedName>
        <fullName evidence="1">Undecaprenyl-diphosphatase</fullName>
        <ecNumber evidence="1">3.6.1.27</ecNumber>
    </recommendedName>
    <alternativeName>
        <fullName evidence="1">Bacitracin resistance protein</fullName>
    </alternativeName>
    <alternativeName>
        <fullName evidence="1">Undecaprenyl pyrophosphate phosphatase</fullName>
    </alternativeName>
</protein>
<reference key="1">
    <citation type="submission" date="2007-02" db="EMBL/GenBank/DDBJ databases">
        <title>Complete sequence of Clostridium thermocellum ATCC 27405.</title>
        <authorList>
            <consortium name="US DOE Joint Genome Institute"/>
            <person name="Copeland A."/>
            <person name="Lucas S."/>
            <person name="Lapidus A."/>
            <person name="Barry K."/>
            <person name="Detter J.C."/>
            <person name="Glavina del Rio T."/>
            <person name="Hammon N."/>
            <person name="Israni S."/>
            <person name="Dalin E."/>
            <person name="Tice H."/>
            <person name="Pitluck S."/>
            <person name="Chertkov O."/>
            <person name="Brettin T."/>
            <person name="Bruce D."/>
            <person name="Han C."/>
            <person name="Tapia R."/>
            <person name="Gilna P."/>
            <person name="Schmutz J."/>
            <person name="Larimer F."/>
            <person name="Land M."/>
            <person name="Hauser L."/>
            <person name="Kyrpides N."/>
            <person name="Mikhailova N."/>
            <person name="Wu J.H.D."/>
            <person name="Newcomb M."/>
            <person name="Richardson P."/>
        </authorList>
    </citation>
    <scope>NUCLEOTIDE SEQUENCE [LARGE SCALE GENOMIC DNA]</scope>
    <source>
        <strain>ATCC 27405 / DSM 1237 / JCM 9322 / NBRC 103400 / NCIMB 10682 / NRRL B-4536 / VPI 7372</strain>
    </source>
</reference>
<organism>
    <name type="scientific">Acetivibrio thermocellus (strain ATCC 27405 / DSM 1237 / JCM 9322 / NBRC 103400 / NCIMB 10682 / NRRL B-4536 / VPI 7372)</name>
    <name type="common">Clostridium thermocellum</name>
    <dbReference type="NCBI Taxonomy" id="203119"/>
    <lineage>
        <taxon>Bacteria</taxon>
        <taxon>Bacillati</taxon>
        <taxon>Bacillota</taxon>
        <taxon>Clostridia</taxon>
        <taxon>Eubacteriales</taxon>
        <taxon>Oscillospiraceae</taxon>
        <taxon>Acetivibrio</taxon>
    </lineage>
</organism>
<accession>A3DHS8</accession>
<comment type="function">
    <text evidence="1">Catalyzes the dephosphorylation of undecaprenyl diphosphate (UPP). Confers resistance to bacitracin.</text>
</comment>
<comment type="catalytic activity">
    <reaction evidence="1">
        <text>di-trans,octa-cis-undecaprenyl diphosphate + H2O = di-trans,octa-cis-undecaprenyl phosphate + phosphate + H(+)</text>
        <dbReference type="Rhea" id="RHEA:28094"/>
        <dbReference type="ChEBI" id="CHEBI:15377"/>
        <dbReference type="ChEBI" id="CHEBI:15378"/>
        <dbReference type="ChEBI" id="CHEBI:43474"/>
        <dbReference type="ChEBI" id="CHEBI:58405"/>
        <dbReference type="ChEBI" id="CHEBI:60392"/>
        <dbReference type="EC" id="3.6.1.27"/>
    </reaction>
</comment>
<comment type="subcellular location">
    <subcellularLocation>
        <location evidence="1">Cell membrane</location>
        <topology evidence="1">Multi-pass membrane protein</topology>
    </subcellularLocation>
</comment>
<comment type="miscellaneous">
    <text>Bacitracin is thought to be involved in the inhibition of peptidoglycan synthesis by sequestering undecaprenyl diphosphate, thereby reducing the pool of lipid carrier available.</text>
</comment>
<comment type="similarity">
    <text evidence="1">Belongs to the UppP family.</text>
</comment>